<accession>B7MAC5</accession>
<dbReference type="EMBL" id="CU928161">
    <property type="protein sequence ID" value="CAR04675.1"/>
    <property type="molecule type" value="Genomic_DNA"/>
</dbReference>
<dbReference type="RefSeq" id="WP_001296424.1">
    <property type="nucleotide sequence ID" value="NC_011742.1"/>
</dbReference>
<dbReference type="SMR" id="B7MAC5"/>
<dbReference type="GeneID" id="75173169"/>
<dbReference type="KEGG" id="ecz:ECS88_3446"/>
<dbReference type="HOGENOM" id="CLU_185971_0_0_6"/>
<dbReference type="Proteomes" id="UP000000747">
    <property type="component" value="Chromosome"/>
</dbReference>
<dbReference type="GO" id="GO:1902201">
    <property type="term" value="P:negative regulation of bacterial-type flagellum-dependent cell motility"/>
    <property type="evidence" value="ECO:0007669"/>
    <property type="project" value="UniProtKB-UniRule"/>
</dbReference>
<dbReference type="GO" id="GO:1900191">
    <property type="term" value="P:negative regulation of single-species biofilm formation"/>
    <property type="evidence" value="ECO:0007669"/>
    <property type="project" value="UniProtKB-UniRule"/>
</dbReference>
<dbReference type="FunFam" id="1.20.970.20:FF:000001">
    <property type="entry name" value="Surface composition regulator"/>
    <property type="match status" value="1"/>
</dbReference>
<dbReference type="Gene3D" id="1.20.970.20">
    <property type="entry name" value="Glycogen synthesis protein GlgS"/>
    <property type="match status" value="1"/>
</dbReference>
<dbReference type="HAMAP" id="MF_00525">
    <property type="entry name" value="GlgS"/>
    <property type="match status" value="1"/>
</dbReference>
<dbReference type="InterPro" id="IPR015065">
    <property type="entry name" value="GlgS"/>
</dbReference>
<dbReference type="InterPro" id="IPR036295">
    <property type="entry name" value="GlgS_sf"/>
</dbReference>
<dbReference type="NCBIfam" id="NF002793">
    <property type="entry name" value="PRK02922.1"/>
    <property type="match status" value="1"/>
</dbReference>
<dbReference type="Pfam" id="PF08971">
    <property type="entry name" value="GlgS"/>
    <property type="match status" value="1"/>
</dbReference>
<dbReference type="SUPFAM" id="SSF109747">
    <property type="entry name" value="Glycogen synthesis protein GlgS"/>
    <property type="match status" value="1"/>
</dbReference>
<protein>
    <recommendedName>
        <fullName evidence="1">Surface composition regulator</fullName>
    </recommendedName>
</protein>
<feature type="chain" id="PRO_1000127734" description="Surface composition regulator">
    <location>
        <begin position="1"/>
        <end position="66"/>
    </location>
</feature>
<keyword id="KW-1185">Reference proteome</keyword>
<name>GLGS_ECO45</name>
<evidence type="ECO:0000255" key="1">
    <source>
        <dbReference type="HAMAP-Rule" id="MF_00525"/>
    </source>
</evidence>
<organism>
    <name type="scientific">Escherichia coli O45:K1 (strain S88 / ExPEC)</name>
    <dbReference type="NCBI Taxonomy" id="585035"/>
    <lineage>
        <taxon>Bacteria</taxon>
        <taxon>Pseudomonadati</taxon>
        <taxon>Pseudomonadota</taxon>
        <taxon>Gammaproteobacteria</taxon>
        <taxon>Enterobacterales</taxon>
        <taxon>Enterobacteriaceae</taxon>
        <taxon>Escherichia</taxon>
    </lineage>
</organism>
<proteinExistence type="inferred from homology"/>
<reference key="1">
    <citation type="journal article" date="2009" name="PLoS Genet.">
        <title>Organised genome dynamics in the Escherichia coli species results in highly diverse adaptive paths.</title>
        <authorList>
            <person name="Touchon M."/>
            <person name="Hoede C."/>
            <person name="Tenaillon O."/>
            <person name="Barbe V."/>
            <person name="Baeriswyl S."/>
            <person name="Bidet P."/>
            <person name="Bingen E."/>
            <person name="Bonacorsi S."/>
            <person name="Bouchier C."/>
            <person name="Bouvet O."/>
            <person name="Calteau A."/>
            <person name="Chiapello H."/>
            <person name="Clermont O."/>
            <person name="Cruveiller S."/>
            <person name="Danchin A."/>
            <person name="Diard M."/>
            <person name="Dossat C."/>
            <person name="Karoui M.E."/>
            <person name="Frapy E."/>
            <person name="Garry L."/>
            <person name="Ghigo J.M."/>
            <person name="Gilles A.M."/>
            <person name="Johnson J."/>
            <person name="Le Bouguenec C."/>
            <person name="Lescat M."/>
            <person name="Mangenot S."/>
            <person name="Martinez-Jehanne V."/>
            <person name="Matic I."/>
            <person name="Nassif X."/>
            <person name="Oztas S."/>
            <person name="Petit M.A."/>
            <person name="Pichon C."/>
            <person name="Rouy Z."/>
            <person name="Ruf C.S."/>
            <person name="Schneider D."/>
            <person name="Tourret J."/>
            <person name="Vacherie B."/>
            <person name="Vallenet D."/>
            <person name="Medigue C."/>
            <person name="Rocha E.P.C."/>
            <person name="Denamur E."/>
        </authorList>
    </citation>
    <scope>NUCLEOTIDE SEQUENCE [LARGE SCALE GENOMIC DNA]</scope>
    <source>
        <strain>S88 / ExPEC</strain>
    </source>
</reference>
<gene>
    <name evidence="1" type="primary">glgS</name>
    <name type="ordered locus">ECS88_3446</name>
</gene>
<comment type="function">
    <text evidence="1">Major determinant of cell surface composition. Negatively regulates motility, adhesion and synthesis of biofilm exopolysaccharides.</text>
</comment>
<comment type="similarity">
    <text evidence="1">Belongs to the GlgS family.</text>
</comment>
<sequence length="66" mass="7922">MDHSLNSLNNFDFLARSFARMHAEGRPVDILAVTGNMDEEHRTWFCARYAWYCQQMMQTRELELEH</sequence>